<keyword id="KW-0150">Chloroplast</keyword>
<keyword id="KW-0934">Plastid</keyword>
<keyword id="KW-0687">Ribonucleoprotein</keyword>
<keyword id="KW-0689">Ribosomal protein</keyword>
<evidence type="ECO:0000250" key="1"/>
<evidence type="ECO:0000255" key="2">
    <source>
        <dbReference type="HAMAP-Rule" id="MF_01320"/>
    </source>
</evidence>
<evidence type="ECO:0000256" key="3">
    <source>
        <dbReference type="SAM" id="MobiDB-lite"/>
    </source>
</evidence>
<evidence type="ECO:0000305" key="4"/>
<geneLocation type="chloroplast"/>
<proteinExistence type="inferred from homology"/>
<reference key="1">
    <citation type="journal article" date="2006" name="Transgenic Res.">
        <title>Efficient and stable transformation of Lactuca sativa L. cv. Cisco (lettuce) plastids.</title>
        <authorList>
            <person name="Kanamoto H."/>
            <person name="Yamashita A."/>
            <person name="Asao H."/>
            <person name="Okumura S."/>
            <person name="Takase H."/>
            <person name="Hattori M."/>
            <person name="Yokota A."/>
            <person name="Tomizawa K."/>
        </authorList>
    </citation>
    <scope>NUCLEOTIDE SEQUENCE [LARGE SCALE GENOMIC DNA]</scope>
    <source>
        <strain>cv. Cisco</strain>
    </source>
</reference>
<reference key="2">
    <citation type="submission" date="2006-01" db="EMBL/GenBank/DDBJ databases">
        <title>A comparison of the first two published chloroplast genomes in Asteraceae: Lactuca and Helianthus.</title>
        <authorList>
            <person name="Timme R.E."/>
            <person name="Kuehl J.V."/>
            <person name="Boore J.L."/>
            <person name="Jansen R.K."/>
        </authorList>
    </citation>
    <scope>NUCLEOTIDE SEQUENCE [LARGE SCALE GENOMIC DNA]</scope>
    <source>
        <strain>cv. Salinas</strain>
    </source>
</reference>
<sequence>MAIHLYKTSTPSTRNGAVDSKVKSNPRNNLIYGQHHCGKGRNARGIITAGHRGGGHKRLYRKIDFRRNEKDIYGRIVTIEYDPNRNAYICLIHYRDGEKRYILHPRGAIIGDTIVSGTEVPIKMGNALPLTDMPLGTAIHNIEITLGKGGQLARAAGAVAKLIAKEGKSATLKLPSGEVRLISKNCSATVGQVGNVGVNQKSLGRAGSKRWLGKRPVVRGVVMNPVDHPHGGGEGRAPIGRKQPTTPWGYPALGKRSRKRNKYSDNLILRRRSK</sequence>
<dbReference type="EMBL" id="AP007232">
    <property type="protein sequence ID" value="BAE47657.1"/>
    <property type="molecule type" value="Genomic_DNA"/>
</dbReference>
<dbReference type="EMBL" id="AP007232">
    <property type="protein sequence ID" value="BAE47637.1"/>
    <property type="molecule type" value="Genomic_DNA"/>
</dbReference>
<dbReference type="EMBL" id="DQ383816">
    <property type="protein sequence ID" value="ABD47274.1"/>
    <property type="molecule type" value="Genomic_DNA"/>
</dbReference>
<dbReference type="SMR" id="Q332R5"/>
<dbReference type="KEGG" id="lsv:3772813"/>
<dbReference type="KEGG" id="lsv:3772814"/>
<dbReference type="OrthoDB" id="563959at2759"/>
<dbReference type="GO" id="GO:0009507">
    <property type="term" value="C:chloroplast"/>
    <property type="evidence" value="ECO:0007669"/>
    <property type="project" value="UniProtKB-SubCell"/>
</dbReference>
<dbReference type="GO" id="GO:0015934">
    <property type="term" value="C:large ribosomal subunit"/>
    <property type="evidence" value="ECO:0007669"/>
    <property type="project" value="InterPro"/>
</dbReference>
<dbReference type="GO" id="GO:0019843">
    <property type="term" value="F:rRNA binding"/>
    <property type="evidence" value="ECO:0007669"/>
    <property type="project" value="UniProtKB-UniRule"/>
</dbReference>
<dbReference type="GO" id="GO:0003735">
    <property type="term" value="F:structural constituent of ribosome"/>
    <property type="evidence" value="ECO:0007669"/>
    <property type="project" value="InterPro"/>
</dbReference>
<dbReference type="GO" id="GO:0016740">
    <property type="term" value="F:transferase activity"/>
    <property type="evidence" value="ECO:0007669"/>
    <property type="project" value="InterPro"/>
</dbReference>
<dbReference type="GO" id="GO:0006412">
    <property type="term" value="P:translation"/>
    <property type="evidence" value="ECO:0007669"/>
    <property type="project" value="UniProtKB-UniRule"/>
</dbReference>
<dbReference type="FunFam" id="4.10.950.10:FF:000001">
    <property type="entry name" value="50S ribosomal protein L2"/>
    <property type="match status" value="1"/>
</dbReference>
<dbReference type="FunFam" id="2.30.30.30:FF:000008">
    <property type="entry name" value="50S ribosomal protein L2, chloroplastic"/>
    <property type="match status" value="1"/>
</dbReference>
<dbReference type="FunFam" id="2.40.50.140:FF:000029">
    <property type="entry name" value="50S ribosomal protein L2, chloroplastic"/>
    <property type="match status" value="1"/>
</dbReference>
<dbReference type="Gene3D" id="2.30.30.30">
    <property type="match status" value="1"/>
</dbReference>
<dbReference type="Gene3D" id="2.40.50.140">
    <property type="entry name" value="Nucleic acid-binding proteins"/>
    <property type="match status" value="1"/>
</dbReference>
<dbReference type="Gene3D" id="4.10.950.10">
    <property type="entry name" value="Ribosomal protein L2, domain 3"/>
    <property type="match status" value="1"/>
</dbReference>
<dbReference type="HAMAP" id="MF_01320_B">
    <property type="entry name" value="Ribosomal_uL2_B"/>
    <property type="match status" value="1"/>
</dbReference>
<dbReference type="InterPro" id="IPR012340">
    <property type="entry name" value="NA-bd_OB-fold"/>
</dbReference>
<dbReference type="InterPro" id="IPR014722">
    <property type="entry name" value="Rib_uL2_dom2"/>
</dbReference>
<dbReference type="InterPro" id="IPR002171">
    <property type="entry name" value="Ribosomal_uL2"/>
</dbReference>
<dbReference type="InterPro" id="IPR005880">
    <property type="entry name" value="Ribosomal_uL2_bac/org-type"/>
</dbReference>
<dbReference type="InterPro" id="IPR022669">
    <property type="entry name" value="Ribosomal_uL2_C"/>
</dbReference>
<dbReference type="InterPro" id="IPR022671">
    <property type="entry name" value="Ribosomal_uL2_CS"/>
</dbReference>
<dbReference type="InterPro" id="IPR014726">
    <property type="entry name" value="Ribosomal_uL2_dom3"/>
</dbReference>
<dbReference type="InterPro" id="IPR022666">
    <property type="entry name" value="Ribosomal_uL2_RNA-bd_dom"/>
</dbReference>
<dbReference type="InterPro" id="IPR008991">
    <property type="entry name" value="Translation_prot_SH3-like_sf"/>
</dbReference>
<dbReference type="NCBIfam" id="TIGR01171">
    <property type="entry name" value="rplB_bact"/>
    <property type="match status" value="1"/>
</dbReference>
<dbReference type="PANTHER" id="PTHR13691:SF5">
    <property type="entry name" value="LARGE RIBOSOMAL SUBUNIT PROTEIN UL2M"/>
    <property type="match status" value="1"/>
</dbReference>
<dbReference type="PANTHER" id="PTHR13691">
    <property type="entry name" value="RIBOSOMAL PROTEIN L2"/>
    <property type="match status" value="1"/>
</dbReference>
<dbReference type="Pfam" id="PF00181">
    <property type="entry name" value="Ribosomal_L2"/>
    <property type="match status" value="1"/>
</dbReference>
<dbReference type="Pfam" id="PF03947">
    <property type="entry name" value="Ribosomal_L2_C"/>
    <property type="match status" value="1"/>
</dbReference>
<dbReference type="PIRSF" id="PIRSF002158">
    <property type="entry name" value="Ribosomal_L2"/>
    <property type="match status" value="1"/>
</dbReference>
<dbReference type="SMART" id="SM01383">
    <property type="entry name" value="Ribosomal_L2"/>
    <property type="match status" value="1"/>
</dbReference>
<dbReference type="SMART" id="SM01382">
    <property type="entry name" value="Ribosomal_L2_C"/>
    <property type="match status" value="1"/>
</dbReference>
<dbReference type="SUPFAM" id="SSF50249">
    <property type="entry name" value="Nucleic acid-binding proteins"/>
    <property type="match status" value="1"/>
</dbReference>
<dbReference type="SUPFAM" id="SSF50104">
    <property type="entry name" value="Translation proteins SH3-like domain"/>
    <property type="match status" value="1"/>
</dbReference>
<dbReference type="PROSITE" id="PS00467">
    <property type="entry name" value="RIBOSOMAL_L2"/>
    <property type="match status" value="1"/>
</dbReference>
<gene>
    <name type="primary">rpl2-A</name>
</gene>
<gene>
    <name type="primary">rpl2-B</name>
</gene>
<feature type="chain" id="PRO_0000237278" description="Large ribosomal subunit protein uL2cz/uL2cy">
    <location>
        <begin position="1"/>
        <end position="274"/>
    </location>
</feature>
<feature type="region of interest" description="Disordered" evidence="3">
    <location>
        <begin position="1"/>
        <end position="23"/>
    </location>
</feature>
<feature type="region of interest" description="Disordered" evidence="3">
    <location>
        <begin position="224"/>
        <end position="274"/>
    </location>
</feature>
<name>RK2_LACSA</name>
<accession>Q332R5</accession>
<protein>
    <recommendedName>
        <fullName evidence="2">Large ribosomal subunit protein uL2cz/uL2cy</fullName>
    </recommendedName>
    <alternativeName>
        <fullName evidence="4">50S ribosomal protein L2, chloroplastic</fullName>
    </alternativeName>
</protein>
<comment type="subunit">
    <text evidence="1">Part of the 50S ribosomal subunit.</text>
</comment>
<comment type="subcellular location">
    <subcellularLocation>
        <location>Plastid</location>
        <location>Chloroplast</location>
    </subcellularLocation>
</comment>
<comment type="similarity">
    <text evidence="4">Belongs to the universal ribosomal protein uL2 family.</text>
</comment>
<organism>
    <name type="scientific">Lactuca sativa</name>
    <name type="common">Garden lettuce</name>
    <dbReference type="NCBI Taxonomy" id="4236"/>
    <lineage>
        <taxon>Eukaryota</taxon>
        <taxon>Viridiplantae</taxon>
        <taxon>Streptophyta</taxon>
        <taxon>Embryophyta</taxon>
        <taxon>Tracheophyta</taxon>
        <taxon>Spermatophyta</taxon>
        <taxon>Magnoliopsida</taxon>
        <taxon>eudicotyledons</taxon>
        <taxon>Gunneridae</taxon>
        <taxon>Pentapetalae</taxon>
        <taxon>asterids</taxon>
        <taxon>campanulids</taxon>
        <taxon>Asterales</taxon>
        <taxon>Asteraceae</taxon>
        <taxon>Cichorioideae</taxon>
        <taxon>Cichorieae</taxon>
        <taxon>Lactucinae</taxon>
        <taxon>Lactuca</taxon>
    </lineage>
</organism>